<feature type="chain" id="PRO_0000322080" description="Riboflavin kinase">
    <location>
        <begin position="1"/>
        <end position="136"/>
    </location>
</feature>
<feature type="binding site" evidence="1">
    <location>
        <begin position="15"/>
        <end position="20"/>
    </location>
    <ligand>
        <name>CDP</name>
        <dbReference type="ChEBI" id="CHEBI:58069"/>
    </ligand>
</feature>
<feature type="binding site" evidence="1">
    <location>
        <position position="44"/>
    </location>
    <ligand>
        <name>Mg(2+)</name>
        <dbReference type="ChEBI" id="CHEBI:18420"/>
    </ligand>
</feature>
<feature type="binding site" evidence="1">
    <location>
        <position position="46"/>
    </location>
    <ligand>
        <name>Mg(2+)</name>
        <dbReference type="ChEBI" id="CHEBI:18420"/>
    </ligand>
</feature>
<feature type="binding site" evidence="1">
    <location>
        <position position="103"/>
    </location>
    <ligand>
        <name>FMN</name>
        <dbReference type="ChEBI" id="CHEBI:58210"/>
    </ligand>
</feature>
<feature type="binding site" evidence="1">
    <location>
        <position position="111"/>
    </location>
    <ligand>
        <name>FMN</name>
        <dbReference type="ChEBI" id="CHEBI:58210"/>
    </ligand>
</feature>
<feature type="binding site" evidence="1">
    <location>
        <begin position="116"/>
        <end position="119"/>
    </location>
    <ligand>
        <name>CDP</name>
        <dbReference type="ChEBI" id="CHEBI:58069"/>
    </ligand>
</feature>
<sequence length="136" mass="15284">MRTKILHIKGKVTAGLGEGRIFLSIPYYIESFKKYLGFEPYAGTLNIVIYDRISLENRLILDLAKGIIIPEHKEPNRVLGSVKAFPSSINSISPAAIVIPARTTHPKSVIEIISPYYLREKLSLKDGDEVEIEVYL</sequence>
<keyword id="KW-0285">Flavoprotein</keyword>
<keyword id="KW-0288">FMN</keyword>
<keyword id="KW-0418">Kinase</keyword>
<keyword id="KW-0460">Magnesium</keyword>
<keyword id="KW-0479">Metal-binding</keyword>
<keyword id="KW-0547">Nucleotide-binding</keyword>
<keyword id="KW-1185">Reference proteome</keyword>
<keyword id="KW-0808">Transferase</keyword>
<name>RIFK_SULTO</name>
<dbReference type="EC" id="2.7.1.161" evidence="1"/>
<dbReference type="EMBL" id="BA000023">
    <property type="protein sequence ID" value="BAB66321.1"/>
    <property type="molecule type" value="Genomic_DNA"/>
</dbReference>
<dbReference type="SMR" id="Q971U9"/>
<dbReference type="STRING" id="273063.STK_12800"/>
<dbReference type="KEGG" id="sto:STK_12800"/>
<dbReference type="PATRIC" id="fig|273063.9.peg.1438"/>
<dbReference type="eggNOG" id="arCOG01904">
    <property type="taxonomic scope" value="Archaea"/>
</dbReference>
<dbReference type="UniPathway" id="UPA00276">
    <property type="reaction ID" value="UER00929"/>
</dbReference>
<dbReference type="Proteomes" id="UP000001015">
    <property type="component" value="Chromosome"/>
</dbReference>
<dbReference type="GO" id="GO:0000287">
    <property type="term" value="F:magnesium ion binding"/>
    <property type="evidence" value="ECO:0007669"/>
    <property type="project" value="UniProtKB-UniRule"/>
</dbReference>
<dbReference type="GO" id="GO:0000166">
    <property type="term" value="F:nucleotide binding"/>
    <property type="evidence" value="ECO:0007669"/>
    <property type="project" value="UniProtKB-UniRule"/>
</dbReference>
<dbReference type="GO" id="GO:0008531">
    <property type="term" value="F:riboflavin kinase activity"/>
    <property type="evidence" value="ECO:0007669"/>
    <property type="project" value="InterPro"/>
</dbReference>
<dbReference type="GO" id="GO:0009398">
    <property type="term" value="P:FMN biosynthetic process"/>
    <property type="evidence" value="ECO:0007669"/>
    <property type="project" value="UniProtKB-UniRule"/>
</dbReference>
<dbReference type="GO" id="GO:0009231">
    <property type="term" value="P:riboflavin biosynthetic process"/>
    <property type="evidence" value="ECO:0007669"/>
    <property type="project" value="InterPro"/>
</dbReference>
<dbReference type="Gene3D" id="2.40.30.30">
    <property type="entry name" value="Riboflavin kinase-like"/>
    <property type="match status" value="1"/>
</dbReference>
<dbReference type="HAMAP" id="MF_01285">
    <property type="entry name" value="Riboflavin_kinase"/>
    <property type="match status" value="1"/>
</dbReference>
<dbReference type="InterPro" id="IPR039063">
    <property type="entry name" value="RibK_CTP-dep"/>
</dbReference>
<dbReference type="InterPro" id="IPR023470">
    <property type="entry name" value="Riboflavin_kinase_archaeal"/>
</dbReference>
<dbReference type="InterPro" id="IPR023602">
    <property type="entry name" value="Riboflavin_kinase_CTP-dep"/>
</dbReference>
<dbReference type="InterPro" id="IPR023465">
    <property type="entry name" value="Riboflavin_kinase_dom_sf"/>
</dbReference>
<dbReference type="PANTHER" id="PTHR40706">
    <property type="entry name" value="RIBOFLAVIN KINASE"/>
    <property type="match status" value="1"/>
</dbReference>
<dbReference type="PANTHER" id="PTHR40706:SF1">
    <property type="entry name" value="RIBOFLAVIN KINASE"/>
    <property type="match status" value="1"/>
</dbReference>
<dbReference type="Pfam" id="PF01982">
    <property type="entry name" value="CTP-dep_RFKase"/>
    <property type="match status" value="1"/>
</dbReference>
<dbReference type="SUPFAM" id="SSF82114">
    <property type="entry name" value="Riboflavin kinase-like"/>
    <property type="match status" value="1"/>
</dbReference>
<accession>Q971U9</accession>
<comment type="function">
    <text evidence="1">Catalyzes the CTP-dependent phosphorylation of riboflavin (vitamin B2) to form flavin mononucleotide (FMN).</text>
</comment>
<comment type="catalytic activity">
    <reaction evidence="1">
        <text>riboflavin + CTP = CDP + FMN + H(+)</text>
        <dbReference type="Rhea" id="RHEA:25021"/>
        <dbReference type="ChEBI" id="CHEBI:15378"/>
        <dbReference type="ChEBI" id="CHEBI:37563"/>
        <dbReference type="ChEBI" id="CHEBI:57986"/>
        <dbReference type="ChEBI" id="CHEBI:58069"/>
        <dbReference type="ChEBI" id="CHEBI:58210"/>
        <dbReference type="EC" id="2.7.1.161"/>
    </reaction>
</comment>
<comment type="cofactor">
    <cofactor evidence="1">
        <name>Mg(2+)</name>
        <dbReference type="ChEBI" id="CHEBI:18420"/>
    </cofactor>
    <text evidence="1">Binds 1 Mg(2+) ion per subunit.</text>
</comment>
<comment type="pathway">
    <text evidence="1">Cofactor biosynthesis; FMN biosynthesis; FMN from riboflavin (CTP route): step 1/1.</text>
</comment>
<comment type="similarity">
    <text evidence="1">Belongs to the archaeal riboflavin kinase family.</text>
</comment>
<evidence type="ECO:0000255" key="1">
    <source>
        <dbReference type="HAMAP-Rule" id="MF_01285"/>
    </source>
</evidence>
<protein>
    <recommendedName>
        <fullName evidence="1">Riboflavin kinase</fullName>
        <shortName evidence="1">RFK</shortName>
        <ecNumber evidence="1">2.7.1.161</ecNumber>
    </recommendedName>
    <alternativeName>
        <fullName evidence="1">CTP-dependent riboflavin kinase</fullName>
    </alternativeName>
    <alternativeName>
        <fullName evidence="1">CTP:riboflavin 5'-phosphotransferase</fullName>
    </alternativeName>
    <alternativeName>
        <fullName evidence="1">Flavokinase</fullName>
    </alternativeName>
</protein>
<gene>
    <name evidence="1" type="primary">ribK</name>
    <name type="ordered locus">STK_12800</name>
</gene>
<reference key="1">
    <citation type="journal article" date="2001" name="DNA Res.">
        <title>Complete genome sequence of an aerobic thermoacidophilic Crenarchaeon, Sulfolobus tokodaii strain7.</title>
        <authorList>
            <person name="Kawarabayasi Y."/>
            <person name="Hino Y."/>
            <person name="Horikawa H."/>
            <person name="Jin-no K."/>
            <person name="Takahashi M."/>
            <person name="Sekine M."/>
            <person name="Baba S."/>
            <person name="Ankai A."/>
            <person name="Kosugi H."/>
            <person name="Hosoyama A."/>
            <person name="Fukui S."/>
            <person name="Nagai Y."/>
            <person name="Nishijima K."/>
            <person name="Otsuka R."/>
            <person name="Nakazawa H."/>
            <person name="Takamiya M."/>
            <person name="Kato Y."/>
            <person name="Yoshizawa T."/>
            <person name="Tanaka T."/>
            <person name="Kudoh Y."/>
            <person name="Yamazaki J."/>
            <person name="Kushida N."/>
            <person name="Oguchi A."/>
            <person name="Aoki K."/>
            <person name="Masuda S."/>
            <person name="Yanagii M."/>
            <person name="Nishimura M."/>
            <person name="Yamagishi A."/>
            <person name="Oshima T."/>
            <person name="Kikuchi H."/>
        </authorList>
    </citation>
    <scope>NUCLEOTIDE SEQUENCE [LARGE SCALE GENOMIC DNA]</scope>
    <source>
        <strain>DSM 16993 / JCM 10545 / NBRC 100140 / 7</strain>
    </source>
</reference>
<organism>
    <name type="scientific">Sulfurisphaera tokodaii (strain DSM 16993 / JCM 10545 / NBRC 100140 / 7)</name>
    <name type="common">Sulfolobus tokodaii</name>
    <dbReference type="NCBI Taxonomy" id="273063"/>
    <lineage>
        <taxon>Archaea</taxon>
        <taxon>Thermoproteota</taxon>
        <taxon>Thermoprotei</taxon>
        <taxon>Sulfolobales</taxon>
        <taxon>Sulfolobaceae</taxon>
        <taxon>Sulfurisphaera</taxon>
    </lineage>
</organism>
<proteinExistence type="inferred from homology"/>